<dbReference type="EMBL" id="CP000572">
    <property type="protein sequence ID" value="ABN91938.1"/>
    <property type="molecule type" value="Genomic_DNA"/>
</dbReference>
<dbReference type="RefSeq" id="WP_004527811.1">
    <property type="nucleotide sequence ID" value="NC_009076.1"/>
</dbReference>
<dbReference type="SMR" id="A3NZS4"/>
<dbReference type="GeneID" id="93061687"/>
<dbReference type="KEGG" id="bpl:BURPS1106A_3614"/>
<dbReference type="HOGENOM" id="CLU_036856_0_1_4"/>
<dbReference type="Proteomes" id="UP000006738">
    <property type="component" value="Chromosome I"/>
</dbReference>
<dbReference type="GO" id="GO:0005737">
    <property type="term" value="C:cytoplasm"/>
    <property type="evidence" value="ECO:0007669"/>
    <property type="project" value="UniProtKB-SubCell"/>
</dbReference>
<dbReference type="GO" id="GO:0016149">
    <property type="term" value="F:translation release factor activity, codon specific"/>
    <property type="evidence" value="ECO:0007669"/>
    <property type="project" value="UniProtKB-UniRule"/>
</dbReference>
<dbReference type="FunFam" id="3.30.160.20:FF:000004">
    <property type="entry name" value="Peptide chain release factor 1"/>
    <property type="match status" value="1"/>
</dbReference>
<dbReference type="FunFam" id="3.30.70.1660:FF:000002">
    <property type="entry name" value="Peptide chain release factor 1"/>
    <property type="match status" value="1"/>
</dbReference>
<dbReference type="FunFam" id="3.30.70.1660:FF:000004">
    <property type="entry name" value="Peptide chain release factor 1"/>
    <property type="match status" value="1"/>
</dbReference>
<dbReference type="Gene3D" id="3.30.160.20">
    <property type="match status" value="1"/>
</dbReference>
<dbReference type="Gene3D" id="3.30.70.1660">
    <property type="match status" value="1"/>
</dbReference>
<dbReference type="Gene3D" id="6.10.140.1950">
    <property type="match status" value="1"/>
</dbReference>
<dbReference type="HAMAP" id="MF_00093">
    <property type="entry name" value="Rel_fac_1"/>
    <property type="match status" value="1"/>
</dbReference>
<dbReference type="InterPro" id="IPR005139">
    <property type="entry name" value="PCRF"/>
</dbReference>
<dbReference type="InterPro" id="IPR000352">
    <property type="entry name" value="Pep_chain_release_fac_I"/>
</dbReference>
<dbReference type="InterPro" id="IPR045853">
    <property type="entry name" value="Pep_chain_release_fac_I_sf"/>
</dbReference>
<dbReference type="InterPro" id="IPR050057">
    <property type="entry name" value="Prokaryotic/Mito_RF"/>
</dbReference>
<dbReference type="InterPro" id="IPR004373">
    <property type="entry name" value="RF-1"/>
</dbReference>
<dbReference type="NCBIfam" id="TIGR00019">
    <property type="entry name" value="prfA"/>
    <property type="match status" value="1"/>
</dbReference>
<dbReference type="NCBIfam" id="NF001859">
    <property type="entry name" value="PRK00591.1"/>
    <property type="match status" value="1"/>
</dbReference>
<dbReference type="PANTHER" id="PTHR43804">
    <property type="entry name" value="LD18447P"/>
    <property type="match status" value="1"/>
</dbReference>
<dbReference type="PANTHER" id="PTHR43804:SF7">
    <property type="entry name" value="LD18447P"/>
    <property type="match status" value="1"/>
</dbReference>
<dbReference type="Pfam" id="PF03462">
    <property type="entry name" value="PCRF"/>
    <property type="match status" value="1"/>
</dbReference>
<dbReference type="Pfam" id="PF00472">
    <property type="entry name" value="RF-1"/>
    <property type="match status" value="1"/>
</dbReference>
<dbReference type="SMART" id="SM00937">
    <property type="entry name" value="PCRF"/>
    <property type="match status" value="1"/>
</dbReference>
<dbReference type="SUPFAM" id="SSF75620">
    <property type="entry name" value="Release factor"/>
    <property type="match status" value="1"/>
</dbReference>
<dbReference type="PROSITE" id="PS00745">
    <property type="entry name" value="RF_PROK_I"/>
    <property type="match status" value="1"/>
</dbReference>
<gene>
    <name evidence="1" type="primary">prfA</name>
    <name type="ordered locus">BURPS1106A_3614</name>
</gene>
<protein>
    <recommendedName>
        <fullName evidence="1">Peptide chain release factor 1</fullName>
        <shortName evidence="1">RF-1</shortName>
    </recommendedName>
</protein>
<comment type="function">
    <text evidence="1">Peptide chain release factor 1 directs the termination of translation in response to the peptide chain termination codons UAG and UAA.</text>
</comment>
<comment type="subcellular location">
    <subcellularLocation>
        <location evidence="1">Cytoplasm</location>
    </subcellularLocation>
</comment>
<comment type="PTM">
    <text evidence="1">Methylated by PrmC. Methylation increases the termination efficiency of RF1.</text>
</comment>
<comment type="similarity">
    <text evidence="1">Belongs to the prokaryotic/mitochondrial release factor family.</text>
</comment>
<reference key="1">
    <citation type="journal article" date="2010" name="Genome Biol. Evol.">
        <title>Continuing evolution of Burkholderia mallei through genome reduction and large-scale rearrangements.</title>
        <authorList>
            <person name="Losada L."/>
            <person name="Ronning C.M."/>
            <person name="DeShazer D."/>
            <person name="Woods D."/>
            <person name="Fedorova N."/>
            <person name="Kim H.S."/>
            <person name="Shabalina S.A."/>
            <person name="Pearson T.R."/>
            <person name="Brinkac L."/>
            <person name="Tan P."/>
            <person name="Nandi T."/>
            <person name="Crabtree J."/>
            <person name="Badger J."/>
            <person name="Beckstrom-Sternberg S."/>
            <person name="Saqib M."/>
            <person name="Schutzer S.E."/>
            <person name="Keim P."/>
            <person name="Nierman W.C."/>
        </authorList>
    </citation>
    <scope>NUCLEOTIDE SEQUENCE [LARGE SCALE GENOMIC DNA]</scope>
    <source>
        <strain>1106a</strain>
    </source>
</reference>
<proteinExistence type="inferred from homology"/>
<evidence type="ECO:0000255" key="1">
    <source>
        <dbReference type="HAMAP-Rule" id="MF_00093"/>
    </source>
</evidence>
<name>RF1_BURP0</name>
<sequence length="360" mass="40484">MKTSMQSKLDQLTTRLAELNDLLSRENVTADLDQYRKLTREHAEIGPVVEHYAQWRQARADELAAQELLADASMRDFAEDELRGARDRMGRLAAELQTMLLPKDPNDERNIFVEIRAGTGGDESALFAGDLLRMYLRYAERQRWQVEMMSESPSDLGGYKEVIVRIAGYGAYSRLKFESGGHRVQRVPATETQGRIHTSACTVAVMPEADEIGEVEINPADLRIDTFRASGAGGQHINKTDSAVRVTHIPTGIVVECQDDRSQHKNKDRALKVLAARIKDKQYHEQHAKEAATRKSLIGSGDRSERIRTYNFPQGRMTDHRINLTLYKLEQIMDGDLDELIAALVSEHQAELLASLGDAE</sequence>
<accession>A3NZS4</accession>
<feature type="chain" id="PRO_1000004867" description="Peptide chain release factor 1">
    <location>
        <begin position="1"/>
        <end position="360"/>
    </location>
</feature>
<feature type="modified residue" description="N5-methylglutamine" evidence="1">
    <location>
        <position position="235"/>
    </location>
</feature>
<organism>
    <name type="scientific">Burkholderia pseudomallei (strain 1106a)</name>
    <dbReference type="NCBI Taxonomy" id="357348"/>
    <lineage>
        <taxon>Bacteria</taxon>
        <taxon>Pseudomonadati</taxon>
        <taxon>Pseudomonadota</taxon>
        <taxon>Betaproteobacteria</taxon>
        <taxon>Burkholderiales</taxon>
        <taxon>Burkholderiaceae</taxon>
        <taxon>Burkholderia</taxon>
        <taxon>pseudomallei group</taxon>
    </lineage>
</organism>
<keyword id="KW-0963">Cytoplasm</keyword>
<keyword id="KW-0488">Methylation</keyword>
<keyword id="KW-0648">Protein biosynthesis</keyword>